<gene>
    <name type="primary">Pkib</name>
</gene>
<proteinExistence type="evidence at protein level"/>
<accession>P27775</accession>
<organism>
    <name type="scientific">Rattus norvegicus</name>
    <name type="common">Rat</name>
    <dbReference type="NCBI Taxonomy" id="10116"/>
    <lineage>
        <taxon>Eukaryota</taxon>
        <taxon>Metazoa</taxon>
        <taxon>Chordata</taxon>
        <taxon>Craniata</taxon>
        <taxon>Vertebrata</taxon>
        <taxon>Euteleostomi</taxon>
        <taxon>Mammalia</taxon>
        <taxon>Eutheria</taxon>
        <taxon>Euarchontoglires</taxon>
        <taxon>Glires</taxon>
        <taxon>Rodentia</taxon>
        <taxon>Myomorpha</taxon>
        <taxon>Muroidea</taxon>
        <taxon>Muridae</taxon>
        <taxon>Murinae</taxon>
        <taxon>Rattus</taxon>
    </lineage>
</organism>
<name>IPKB_RAT</name>
<feature type="chain" id="PRO_0000154540" description="cAMP-dependent protein kinase inhibitor beta">
    <location>
        <begin position="1"/>
        <end position="71"/>
    </location>
</feature>
<feature type="region of interest" description="Disordered" evidence="2">
    <location>
        <begin position="1"/>
        <end position="21"/>
    </location>
</feature>
<feature type="region of interest" description="Disordered" evidence="2">
    <location>
        <begin position="51"/>
        <end position="71"/>
    </location>
</feature>
<feature type="site" description="Important for inhibition" evidence="1">
    <location>
        <position position="16"/>
    </location>
</feature>
<feature type="site" description="Important for inhibition" evidence="1">
    <location>
        <position position="19"/>
    </location>
</feature>
<feature type="site" description="Important for inhibition" evidence="1">
    <location>
        <position position="20"/>
    </location>
</feature>
<feature type="modified residue" description="Blocked amino end (Thr)">
    <location>
        <position position="2"/>
    </location>
</feature>
<feature type="modified residue" description="Phosphoserine" evidence="4">
    <location>
        <position position="35"/>
    </location>
</feature>
<evidence type="ECO:0000250" key="1"/>
<evidence type="ECO:0000256" key="2">
    <source>
        <dbReference type="SAM" id="MobiDB-lite"/>
    </source>
</evidence>
<evidence type="ECO:0000305" key="3"/>
<evidence type="ECO:0007744" key="4">
    <source>
    </source>
</evidence>
<dbReference type="EMBL" id="M64092">
    <property type="protein sequence ID" value="AAA41879.1"/>
    <property type="molecule type" value="mRNA"/>
</dbReference>
<dbReference type="PIR" id="A40962">
    <property type="entry name" value="A40962"/>
</dbReference>
<dbReference type="FunCoup" id="P27775">
    <property type="interactions" value="44"/>
</dbReference>
<dbReference type="STRING" id="10116.ENSRNOP00000001075"/>
<dbReference type="iPTMnet" id="P27775"/>
<dbReference type="PhosphoSitePlus" id="P27775"/>
<dbReference type="PaxDb" id="10116-ENSRNOP00000001075"/>
<dbReference type="AGR" id="RGD:3335"/>
<dbReference type="RGD" id="3335">
    <property type="gene designation" value="Pkib"/>
</dbReference>
<dbReference type="eggNOG" id="ENOG502S8BW">
    <property type="taxonomic scope" value="Eukaryota"/>
</dbReference>
<dbReference type="InParanoid" id="P27775"/>
<dbReference type="PRO" id="PR:P27775"/>
<dbReference type="Proteomes" id="UP000002494">
    <property type="component" value="Unplaced"/>
</dbReference>
<dbReference type="GO" id="GO:0005737">
    <property type="term" value="C:cytoplasm"/>
    <property type="evidence" value="ECO:0000318"/>
    <property type="project" value="GO_Central"/>
</dbReference>
<dbReference type="GO" id="GO:0005634">
    <property type="term" value="C:nucleus"/>
    <property type="evidence" value="ECO:0000318"/>
    <property type="project" value="GO_Central"/>
</dbReference>
<dbReference type="GO" id="GO:0004862">
    <property type="term" value="F:cAMP-dependent protein kinase inhibitor activity"/>
    <property type="evidence" value="ECO:0000266"/>
    <property type="project" value="RGD"/>
</dbReference>
<dbReference type="GO" id="GO:0032206">
    <property type="term" value="P:positive regulation of telomere maintenance"/>
    <property type="evidence" value="ECO:0000266"/>
    <property type="project" value="RGD"/>
</dbReference>
<dbReference type="InterPro" id="IPR004171">
    <property type="entry name" value="cAMP_dep_PKI"/>
</dbReference>
<dbReference type="PANTHER" id="PTHR15416">
    <property type="entry name" value="CAMP-DEPENDENT PROTEIN KINASE INHIBITOR/PKI"/>
    <property type="match status" value="1"/>
</dbReference>
<dbReference type="Pfam" id="PF02827">
    <property type="entry name" value="PKI"/>
    <property type="match status" value="1"/>
</dbReference>
<dbReference type="PIRSF" id="PIRSF001667">
    <property type="entry name" value="PKI"/>
    <property type="match status" value="1"/>
</dbReference>
<keyword id="KW-0903">Direct protein sequencing</keyword>
<keyword id="KW-0597">Phosphoprotein</keyword>
<keyword id="KW-0649">Protein kinase inhibitor</keyword>
<keyword id="KW-1185">Reference proteome</keyword>
<sequence length="71" mass="7585">MTDVESVISSFASSARAGRRNALPDIQSSLATGGSPDLALKLEALAVKEDAKMKNEEKDQGQPKKPLDEDK</sequence>
<protein>
    <recommendedName>
        <fullName>cAMP-dependent protein kinase inhibitor beta</fullName>
    </recommendedName>
    <alternativeName>
        <fullName>PKI-beta</fullName>
    </alternativeName>
    <alternativeName>
        <fullName>cAMP-dependent protein kinase inhibitor, testis isoform</fullName>
    </alternativeName>
</protein>
<comment type="function">
    <text>Extremely potent competitive inhibitor of cAMP-dependent protein kinase activity, this protein interacts with the catalytic subunit of the enzyme after the cAMP-induced dissociation of its regulatory chains.</text>
</comment>
<comment type="tissue specificity">
    <text>Testis.</text>
</comment>
<comment type="similarity">
    <text evidence="3">Belongs to the PKI family.</text>
</comment>
<reference key="1">
    <citation type="journal article" date="1991" name="Proc. Natl. Acad. Sci. U.S.A.">
        <title>Molecular cloning of a rat testis form of the inhibitor protein of cAMP-dependent protein kinase.</title>
        <authorList>
            <person name="van Patten S.M."/>
            <person name="Ng D.C."/>
            <person name="Th'Ng J.P.H."/>
            <person name="Angelos K.L."/>
            <person name="Smith A.J."/>
            <person name="Walsh D.A."/>
        </authorList>
    </citation>
    <scope>NUCLEOTIDE SEQUENCE [MRNA]</scope>
    <scope>PARTIAL PROTEIN SEQUENCE</scope>
    <source>
        <tissue>Testis</tissue>
    </source>
</reference>
<reference key="2">
    <citation type="journal article" date="2012" name="Nat. Commun.">
        <title>Quantitative maps of protein phosphorylation sites across 14 different rat organs and tissues.</title>
        <authorList>
            <person name="Lundby A."/>
            <person name="Secher A."/>
            <person name="Lage K."/>
            <person name="Nordsborg N.B."/>
            <person name="Dmytriyev A."/>
            <person name="Lundby C."/>
            <person name="Olsen J.V."/>
        </authorList>
    </citation>
    <scope>PHOSPHORYLATION [LARGE SCALE ANALYSIS] AT SER-35</scope>
    <scope>IDENTIFICATION BY MASS SPECTROMETRY [LARGE SCALE ANALYSIS]</scope>
</reference>